<reference evidence="11" key="1">
    <citation type="journal article" date="2002" name="Gene">
        <title>Identification, localization and receptor characterization of novel mammalian substance P-like peptides.</title>
        <authorList>
            <person name="Kurtz M.M."/>
            <person name="Wang R."/>
            <person name="Clements M.K."/>
            <person name="Cascieri M.A."/>
            <person name="Austin C.P."/>
            <person name="Cunningham B.R."/>
            <person name="Chicchi G.G."/>
            <person name="Liu Q."/>
        </authorList>
    </citation>
    <scope>NUCLEOTIDE SEQUENCE [MRNA]</scope>
    <scope>AMIDATION AT MET-66</scope>
    <source>
        <strain evidence="11">Sprague-Dawley</strain>
    </source>
</reference>
<reference evidence="12" key="2">
    <citation type="submission" date="2003-11" db="EMBL/GenBank/DDBJ databases">
        <authorList>
            <person name="Page N.M."/>
        </authorList>
    </citation>
    <scope>NUCLEOTIDE SEQUENCE [MRNA]</scope>
    <source>
        <strain evidence="12">New England Deaconess Hospital</strain>
    </source>
</reference>
<reference evidence="10" key="3">
    <citation type="journal article" date="2002" name="Br. J. Pharmacol.">
        <title>Pharmacological profile of the novel mammalian tachykinin, hemokinin 1.</title>
        <authorList>
            <person name="Bellucci F."/>
            <person name="Carini F."/>
            <person name="Catalani C."/>
            <person name="Cucchi P."/>
            <person name="Lecci A."/>
            <person name="Meini S."/>
            <person name="Patacchini R."/>
            <person name="Quartara L."/>
            <person name="Ricci R."/>
            <person name="Tramontana M."/>
            <person name="Giuliani S."/>
            <person name="Maggi C.A."/>
        </authorList>
    </citation>
    <scope>SYNTHESIS</scope>
    <scope>FUNCTION</scope>
</reference>
<reference evidence="10" key="4">
    <citation type="journal article" date="2002" name="Life Sci.">
        <title>Pharmacological profile of hemokinin 1: a novel member of the tachykinin family.</title>
        <authorList>
            <person name="Camarda V."/>
            <person name="Rizzi A."/>
            <person name="Calo G."/>
            <person name="Guerrini R."/>
            <person name="Salvadori S."/>
            <person name="Regoli D."/>
        </authorList>
    </citation>
    <scope>SYNTHESIS</scope>
    <scope>FUNCTION</scope>
</reference>
<reference evidence="10" key="5">
    <citation type="journal article" date="2005" name="Brain Res.">
        <title>Effects and mechanisms of supraspinal administration of rat/mouse hemokinin-1, a mammalian tachykinin peptide, on nociception in mice.</title>
        <authorList>
            <person name="Fu C.-Y."/>
            <person name="Kong Z.-Q."/>
            <person name="Wang K.-R."/>
            <person name="Yang Q."/>
            <person name="Zhai K."/>
            <person name="Chen Q."/>
            <person name="Wang R."/>
        </authorList>
    </citation>
    <scope>SYNTHESIS</scope>
    <scope>FUNCTION</scope>
</reference>
<reference evidence="10" key="6">
    <citation type="journal article" date="2007" name="Eur. J. Pharmacol.">
        <title>Cardiovascular responses to rat/mouse hemokinin-1, a mammalian tachykinin peptide: systemic study in anesthetized rats.</title>
        <authorList>
            <person name="Fu C.-Y."/>
            <person name="Kong Z.-Q."/>
            <person name="Long Y."/>
            <person name="Chen Q."/>
            <person name="Wang R."/>
        </authorList>
    </citation>
    <scope>SYNTHESIS</scope>
    <scope>FUNCTION</scope>
</reference>
<sequence length="170" mass="18751">MLPLLALFLLIGPAVSTTTRDREDLTFGAEAESWVTVNLKGIPVPSIELKLQELKRSRTRQFYGLMGKRVEGVHPIQSAERTGYQLGRIVQDLLGTRGLSIEGSCRQETNHQSAGPGAVARESLQSQRGRSEPPNHQQHVALSLGTEEDDQSSERAPRDASQMMPRPSRP</sequence>
<evidence type="ECO:0000250" key="1"/>
<evidence type="ECO:0000255" key="2"/>
<evidence type="ECO:0000256" key="3">
    <source>
        <dbReference type="SAM" id="MobiDB-lite"/>
    </source>
</evidence>
<evidence type="ECO:0000269" key="4">
    <source>
    </source>
</evidence>
<evidence type="ECO:0000269" key="5">
    <source>
    </source>
</evidence>
<evidence type="ECO:0000269" key="6">
    <source>
    </source>
</evidence>
<evidence type="ECO:0000269" key="7">
    <source>
    </source>
</evidence>
<evidence type="ECO:0000269" key="8">
    <source>
    </source>
</evidence>
<evidence type="ECO:0000303" key="9">
    <source>
    </source>
</evidence>
<evidence type="ECO:0000305" key="10"/>
<evidence type="ECO:0000312" key="11">
    <source>
        <dbReference type="EMBL" id="AAN77129.1"/>
    </source>
</evidence>
<evidence type="ECO:0000312" key="12">
    <source>
        <dbReference type="EMBL" id="AAS46597.1"/>
    </source>
</evidence>
<evidence type="ECO:0000312" key="13">
    <source>
        <dbReference type="RGD" id="628842"/>
    </source>
</evidence>
<protein>
    <recommendedName>
        <fullName>Tachykinin-4</fullName>
    </recommendedName>
    <alternativeName>
        <fullName>Preprotachykinin-C</fullName>
        <shortName>PPT-C</shortName>
    </alternativeName>
    <component>
        <recommendedName>
            <fullName>Hemokinin</fullName>
        </recommendedName>
        <alternativeName>
            <fullName>HK1</fullName>
        </alternativeName>
        <alternativeName>
            <fullName>Hemokinin-1</fullName>
        </alternativeName>
        <alternativeName>
            <fullName>Hemokinin-I</fullName>
            <shortName>HK-I</shortName>
        </alternativeName>
    </component>
</protein>
<keyword id="KW-0027">Amidation</keyword>
<keyword id="KW-0165">Cleavage on pair of basic residues</keyword>
<keyword id="KW-0382">Hypotensive agent</keyword>
<keyword id="KW-0467">Mast cell degranulation</keyword>
<keyword id="KW-1185">Reference proteome</keyword>
<keyword id="KW-0964">Secreted</keyword>
<keyword id="KW-0732">Signal</keyword>
<dbReference type="EMBL" id="AF521561">
    <property type="protein sequence ID" value="AAN77129.1"/>
    <property type="molecule type" value="mRNA"/>
</dbReference>
<dbReference type="EMBL" id="AY471575">
    <property type="protein sequence ID" value="AAS46597.1"/>
    <property type="molecule type" value="mRNA"/>
</dbReference>
<dbReference type="RefSeq" id="NP_758831.1">
    <property type="nucleotide sequence ID" value="NM_172328.2"/>
</dbReference>
<dbReference type="SMR" id="Q8CH01"/>
<dbReference type="FunCoup" id="Q8CH01">
    <property type="interactions" value="1"/>
</dbReference>
<dbReference type="STRING" id="10116.ENSRNOP00000029541"/>
<dbReference type="PaxDb" id="10116-ENSRNOP00000029541"/>
<dbReference type="Ensembl" id="ENSRNOT00000035023.4">
    <property type="protein sequence ID" value="ENSRNOP00000029541.2"/>
    <property type="gene ID" value="ENSRNOG00000004404.6"/>
</dbReference>
<dbReference type="GeneID" id="282829"/>
<dbReference type="KEGG" id="rno:282829"/>
<dbReference type="UCSC" id="RGD:628842">
    <property type="organism name" value="rat"/>
</dbReference>
<dbReference type="AGR" id="RGD:628842"/>
<dbReference type="CTD" id="255061"/>
<dbReference type="RGD" id="628842">
    <property type="gene designation" value="Tac4"/>
</dbReference>
<dbReference type="eggNOG" id="ENOG502TEEE">
    <property type="taxonomic scope" value="Eukaryota"/>
</dbReference>
<dbReference type="GeneTree" id="ENSGT00390000015220"/>
<dbReference type="HOGENOM" id="CLU_133899_0_0_1"/>
<dbReference type="InParanoid" id="Q8CH01"/>
<dbReference type="OMA" id="EAESWVT"/>
<dbReference type="OrthoDB" id="9538060at2759"/>
<dbReference type="TreeFam" id="TF338519"/>
<dbReference type="PRO" id="PR:Q8CH01"/>
<dbReference type="Proteomes" id="UP000002494">
    <property type="component" value="Chromosome 10"/>
</dbReference>
<dbReference type="Bgee" id="ENSRNOG00000004404">
    <property type="expression patterns" value="Expressed in esophagus and 11 other cell types or tissues"/>
</dbReference>
<dbReference type="GO" id="GO:0005615">
    <property type="term" value="C:extracellular space"/>
    <property type="evidence" value="ECO:0000266"/>
    <property type="project" value="RGD"/>
</dbReference>
<dbReference type="GO" id="GO:0048018">
    <property type="term" value="F:receptor ligand activity"/>
    <property type="evidence" value="ECO:0000266"/>
    <property type="project" value="RGD"/>
</dbReference>
<dbReference type="GO" id="GO:0005102">
    <property type="term" value="F:signaling receptor binding"/>
    <property type="evidence" value="ECO:0000266"/>
    <property type="project" value="RGD"/>
</dbReference>
<dbReference type="GO" id="GO:0031837">
    <property type="term" value="F:substance K receptor binding"/>
    <property type="evidence" value="ECO:0000266"/>
    <property type="project" value="RGD"/>
</dbReference>
<dbReference type="GO" id="GO:0031835">
    <property type="term" value="F:substance P receptor binding"/>
    <property type="evidence" value="ECO:0000266"/>
    <property type="project" value="RGD"/>
</dbReference>
<dbReference type="GO" id="GO:0050965">
    <property type="term" value="P:detection of temperature stimulus involved in sensory perception of pain"/>
    <property type="evidence" value="ECO:0000266"/>
    <property type="project" value="RGD"/>
</dbReference>
<dbReference type="GO" id="GO:0006954">
    <property type="term" value="P:inflammatory response"/>
    <property type="evidence" value="ECO:0000318"/>
    <property type="project" value="GO_Central"/>
</dbReference>
<dbReference type="GO" id="GO:0043303">
    <property type="term" value="P:mast cell degranulation"/>
    <property type="evidence" value="ECO:0007669"/>
    <property type="project" value="UniProtKB-KW"/>
</dbReference>
<dbReference type="GO" id="GO:1904057">
    <property type="term" value="P:negative regulation of sensory perception of pain"/>
    <property type="evidence" value="ECO:0000266"/>
    <property type="project" value="RGD"/>
</dbReference>
<dbReference type="GO" id="GO:0003085">
    <property type="term" value="P:negative regulation of systemic arterial blood pressure"/>
    <property type="evidence" value="ECO:0000266"/>
    <property type="project" value="RGD"/>
</dbReference>
<dbReference type="GO" id="GO:0007204">
    <property type="term" value="P:positive regulation of cytosolic calcium ion concentration"/>
    <property type="evidence" value="ECO:0000266"/>
    <property type="project" value="RGD"/>
</dbReference>
<dbReference type="GO" id="GO:1902093">
    <property type="term" value="P:positive regulation of flagellated sperm motility"/>
    <property type="evidence" value="ECO:0000266"/>
    <property type="project" value="RGD"/>
</dbReference>
<dbReference type="GO" id="GO:0046878">
    <property type="term" value="P:positive regulation of saliva secretion"/>
    <property type="evidence" value="ECO:0000266"/>
    <property type="project" value="RGD"/>
</dbReference>
<dbReference type="GO" id="GO:0051930">
    <property type="term" value="P:regulation of sensory perception of pain"/>
    <property type="evidence" value="ECO:0000266"/>
    <property type="project" value="RGD"/>
</dbReference>
<dbReference type="GO" id="GO:0007217">
    <property type="term" value="P:tachykinin receptor signaling pathway"/>
    <property type="evidence" value="ECO:0000266"/>
    <property type="project" value="RGD"/>
</dbReference>
<dbReference type="InterPro" id="IPR013055">
    <property type="entry name" value="Tachy_Neuro_lke_CS"/>
</dbReference>
<dbReference type="PANTHER" id="PTHR11250">
    <property type="entry name" value="TACHYKININ"/>
    <property type="match status" value="1"/>
</dbReference>
<dbReference type="PANTHER" id="PTHR11250:SF2">
    <property type="entry name" value="TACHYKININ-4"/>
    <property type="match status" value="1"/>
</dbReference>
<dbReference type="PROSITE" id="PS00267">
    <property type="entry name" value="TACHYKININ"/>
    <property type="match status" value="1"/>
</dbReference>
<accession>Q8CH01</accession>
<proteinExistence type="evidence at protein level"/>
<organism>
    <name type="scientific">Rattus norvegicus</name>
    <name type="common">Rat</name>
    <dbReference type="NCBI Taxonomy" id="10116"/>
    <lineage>
        <taxon>Eukaryota</taxon>
        <taxon>Metazoa</taxon>
        <taxon>Chordata</taxon>
        <taxon>Craniata</taxon>
        <taxon>Vertebrata</taxon>
        <taxon>Euteleostomi</taxon>
        <taxon>Mammalia</taxon>
        <taxon>Eutheria</taxon>
        <taxon>Euarchontoglires</taxon>
        <taxon>Glires</taxon>
        <taxon>Rodentia</taxon>
        <taxon>Myomorpha</taxon>
        <taxon>Muroidea</taxon>
        <taxon>Muridae</taxon>
        <taxon>Murinae</taxon>
        <taxon>Rattus</taxon>
    </lineage>
</organism>
<gene>
    <name evidence="12 13" type="primary">Tac4</name>
</gene>
<feature type="signal peptide" evidence="2">
    <location>
        <begin position="1"/>
        <end position="16"/>
    </location>
</feature>
<feature type="propeptide" id="PRO_0000320019" evidence="1">
    <location>
        <begin position="17"/>
        <end position="54"/>
    </location>
</feature>
<feature type="peptide" id="PRO_0000320020" description="Hemokinin" evidence="6">
    <location>
        <begin position="57"/>
        <end position="66"/>
    </location>
</feature>
<feature type="propeptide" id="PRO_0000320021" evidence="1">
    <location>
        <begin position="67"/>
        <end position="170"/>
    </location>
</feature>
<feature type="region of interest" description="Disordered" evidence="3">
    <location>
        <begin position="107"/>
        <end position="170"/>
    </location>
</feature>
<feature type="compositionally biased region" description="Polar residues" evidence="3">
    <location>
        <begin position="123"/>
        <end position="140"/>
    </location>
</feature>
<feature type="modified residue" description="Methionine amide" evidence="2 9">
    <location>
        <position position="66"/>
    </location>
</feature>
<name>TKN4_RAT</name>
<comment type="function">
    <text evidence="4 5 7 8">Tachykinins are active peptides which excite neurons, evoke behavioral responses, are potent vasodilators and secretagogues, and contract (directly or indirectly) many smooth muscles. Hemokinin induces plasma extravasation, mast cell degranulation, muscle contraction, salivary secretion and scratching behavior. Increases sperm motility. Induces potent analgesic effects and may play a role in pain modulation. Promotes survival of bone marrow B lineage cells and of cultured LPS-stimulated pre-B cells and may act as an autocrine factor required for B-cell survival and proliferation. Lowers systemic arterial pressure following intravenous injection. Induces interferon-gamma production and may play a role in the inflammatory response. Shows potent affinity and specificity for the NK-1 receptor.</text>
</comment>
<comment type="subcellular location">
    <subcellularLocation>
        <location evidence="10">Secreted</location>
    </subcellularLocation>
</comment>
<comment type="similarity">
    <text evidence="2">Belongs to the tachykinin family.</text>
</comment>